<sequence>MPYLDHAGSTLPSKTQLEELAKLQTQLILANPHSHHSTAIKTQQIVSSARHRILRYFNTTADDYFVVFTNNTTHALKIVAENFNFGHRTQEGVVSEISAVLKGGPSNFAYFNDSHHSVVGLRHVVLGKVDAISCVNEDVVKEECIPKVENSLFVFTAMSNFLIPFQINEKLISGWSVCVDAAALVSGTRLDLTAHRPNFVAFSFYKIFGYPTGIGALLVKKDSSKSIEKTSFAGGTVQSVDEMTMHFVIRDFERAYEEGTINSYGIAQLQKGFEEIERCGGMQAIRAHTYDLRSKAVQILQSKTHPNGKKVVEIYSQPHIQVSPETQGAIVAFNLVRPDNGYYGYTEVEKMCAIFGIELRTGCFCNIGACKKYLGITSEMIKENMSKGKRCGDEIDLINGRPTGAVRISFGRMSTEQDIEVLKQMIDTCFVSSEKVFSPSLQSLKIDSFLPTVVNLFSFPIKSVGSVAKSRYELTPRGFKHDREFLVVKDDVTLNLKMHPELCRLTATIVNDEELHIQTFDQNDNLVIPMSLSLKENDAKVVCKKTIATFDCGDKVGQWLENALDMTNCRLLRVAGESKKNFVNDSPFLLINEASVYMLARHIDMDVQDILTRFRSNIVVRGLPPFIEDTAKRLSIENLEFEVVDKCTRCEMICVDPMTGEKDPSLLLALRDYRNKQKMTFGIYIRQSNFEPGQFVEAGSAVRFFTD</sequence>
<protein>
    <recommendedName>
        <fullName evidence="2">Molybdenum cofactor sulfurase</fullName>
        <shortName evidence="2">MCS</shortName>
        <shortName evidence="2">MOS</shortName>
        <shortName evidence="2">MoCo sulfurase</shortName>
        <ecNumber evidence="2">2.8.1.9</ecNumber>
    </recommendedName>
    <alternativeName>
        <fullName evidence="2">Molybdenum cofactor sulfurtransferase</fullName>
    </alternativeName>
</protein>
<proteinExistence type="inferred from homology"/>
<name>MOCOS_CAEBR</name>
<evidence type="ECO:0000250" key="1">
    <source>
        <dbReference type="UniProtKB" id="Q96EN8"/>
    </source>
</evidence>
<evidence type="ECO:0000255" key="2">
    <source>
        <dbReference type="HAMAP-Rule" id="MF_03050"/>
    </source>
</evidence>
<evidence type="ECO:0000305" key="3"/>
<dbReference type="EC" id="2.8.1.9" evidence="2"/>
<dbReference type="EMBL" id="HE601041">
    <property type="protein sequence ID" value="CAP27453.2"/>
    <property type="status" value="ALT_SEQ"/>
    <property type="molecule type" value="Genomic_DNA"/>
</dbReference>
<dbReference type="SMR" id="A8X493"/>
<dbReference type="FunCoup" id="A8X493">
    <property type="interactions" value="650"/>
</dbReference>
<dbReference type="STRING" id="6238.A8X493"/>
<dbReference type="WormBase" id="CBG07703">
    <property type="protein sequence ID" value="CBP37952"/>
    <property type="gene ID" value="WBGene00029667"/>
    <property type="gene designation" value="Cbr-mocs-1"/>
</dbReference>
<dbReference type="InParanoid" id="A8X493"/>
<dbReference type="UniPathway" id="UPA00344"/>
<dbReference type="Proteomes" id="UP000008549">
    <property type="component" value="Unassembled WGS sequence"/>
</dbReference>
<dbReference type="GO" id="GO:0016829">
    <property type="term" value="F:lyase activity"/>
    <property type="evidence" value="ECO:0007669"/>
    <property type="project" value="UniProtKB-UniRule"/>
</dbReference>
<dbReference type="GO" id="GO:0008265">
    <property type="term" value="F:molybdenum cofactor sulfurtransferase activity"/>
    <property type="evidence" value="ECO:0000250"/>
    <property type="project" value="UniProtKB"/>
</dbReference>
<dbReference type="GO" id="GO:0030151">
    <property type="term" value="F:molybdenum ion binding"/>
    <property type="evidence" value="ECO:0007669"/>
    <property type="project" value="UniProtKB-UniRule"/>
</dbReference>
<dbReference type="GO" id="GO:0030170">
    <property type="term" value="F:pyridoxal phosphate binding"/>
    <property type="evidence" value="ECO:0007669"/>
    <property type="project" value="UniProtKB-UniRule"/>
</dbReference>
<dbReference type="GO" id="GO:0006777">
    <property type="term" value="P:Mo-molybdopterin cofactor biosynthetic process"/>
    <property type="evidence" value="ECO:0007669"/>
    <property type="project" value="UniProtKB-UniRule"/>
</dbReference>
<dbReference type="GO" id="GO:0043545">
    <property type="term" value="P:molybdopterin cofactor metabolic process"/>
    <property type="evidence" value="ECO:0000250"/>
    <property type="project" value="UniProtKB"/>
</dbReference>
<dbReference type="FunFam" id="3.40.640.10:FF:000238">
    <property type="entry name" value="Molybdenum cofactor sulfurase"/>
    <property type="match status" value="1"/>
</dbReference>
<dbReference type="FunFam" id="3.90.1150.10:FF:000079">
    <property type="entry name" value="Molybdenum cofactor sulfurase"/>
    <property type="match status" value="1"/>
</dbReference>
<dbReference type="Gene3D" id="3.90.1150.10">
    <property type="entry name" value="Aspartate Aminotransferase, domain 1"/>
    <property type="match status" value="1"/>
</dbReference>
<dbReference type="Gene3D" id="3.40.640.10">
    <property type="entry name" value="Type I PLP-dependent aspartate aminotransferase-like (Major domain)"/>
    <property type="match status" value="1"/>
</dbReference>
<dbReference type="HAMAP" id="MF_03050">
    <property type="entry name" value="MOCOS"/>
    <property type="match status" value="1"/>
</dbReference>
<dbReference type="InterPro" id="IPR000192">
    <property type="entry name" value="Aminotrans_V_dom"/>
</dbReference>
<dbReference type="InterPro" id="IPR005302">
    <property type="entry name" value="MoCF_Sase_C"/>
</dbReference>
<dbReference type="InterPro" id="IPR028886">
    <property type="entry name" value="MoCo_sulfurase"/>
</dbReference>
<dbReference type="InterPro" id="IPR005303">
    <property type="entry name" value="MOCOS_middle"/>
</dbReference>
<dbReference type="InterPro" id="IPR015424">
    <property type="entry name" value="PyrdxlP-dep_Trfase"/>
</dbReference>
<dbReference type="InterPro" id="IPR015421">
    <property type="entry name" value="PyrdxlP-dep_Trfase_major"/>
</dbReference>
<dbReference type="InterPro" id="IPR015422">
    <property type="entry name" value="PyrdxlP-dep_Trfase_small"/>
</dbReference>
<dbReference type="InterPro" id="IPR011037">
    <property type="entry name" value="Pyrv_Knase-like_insert_dom_sf"/>
</dbReference>
<dbReference type="PANTHER" id="PTHR14237:SF19">
    <property type="entry name" value="MITOCHONDRIAL AMIDOXIME REDUCING COMPONENT 1"/>
    <property type="match status" value="1"/>
</dbReference>
<dbReference type="PANTHER" id="PTHR14237">
    <property type="entry name" value="MOLYBDOPTERIN COFACTOR SULFURASE MOSC"/>
    <property type="match status" value="1"/>
</dbReference>
<dbReference type="Pfam" id="PF00266">
    <property type="entry name" value="Aminotran_5"/>
    <property type="match status" value="1"/>
</dbReference>
<dbReference type="Pfam" id="PF03473">
    <property type="entry name" value="MOSC"/>
    <property type="match status" value="1"/>
</dbReference>
<dbReference type="Pfam" id="PF03476">
    <property type="entry name" value="MOSC_N"/>
    <property type="match status" value="1"/>
</dbReference>
<dbReference type="SUPFAM" id="SSF141673">
    <property type="entry name" value="MOSC N-terminal domain-like"/>
    <property type="match status" value="1"/>
</dbReference>
<dbReference type="SUPFAM" id="SSF50800">
    <property type="entry name" value="PK beta-barrel domain-like"/>
    <property type="match status" value="1"/>
</dbReference>
<dbReference type="SUPFAM" id="SSF53383">
    <property type="entry name" value="PLP-dependent transferases"/>
    <property type="match status" value="1"/>
</dbReference>
<dbReference type="PROSITE" id="PS51340">
    <property type="entry name" value="MOSC"/>
    <property type="match status" value="1"/>
</dbReference>
<keyword id="KW-0501">Molybdenum cofactor biosynthesis</keyword>
<keyword id="KW-0663">Pyridoxal phosphate</keyword>
<keyword id="KW-1185">Reference proteome</keyword>
<keyword id="KW-0808">Transferase</keyword>
<reference key="1">
    <citation type="journal article" date="2003" name="PLoS Biol.">
        <title>The genome sequence of Caenorhabditis briggsae: a platform for comparative genomics.</title>
        <authorList>
            <person name="Stein L.D."/>
            <person name="Bao Z."/>
            <person name="Blasiar D."/>
            <person name="Blumenthal T."/>
            <person name="Brent M.R."/>
            <person name="Chen N."/>
            <person name="Chinwalla A."/>
            <person name="Clarke L."/>
            <person name="Clee C."/>
            <person name="Coghlan A."/>
            <person name="Coulson A."/>
            <person name="D'Eustachio P."/>
            <person name="Fitch D.H.A."/>
            <person name="Fulton L.A."/>
            <person name="Fulton R.E."/>
            <person name="Griffiths-Jones S."/>
            <person name="Harris T.W."/>
            <person name="Hillier L.W."/>
            <person name="Kamath R."/>
            <person name="Kuwabara P.E."/>
            <person name="Mardis E.R."/>
            <person name="Marra M.A."/>
            <person name="Miner T.L."/>
            <person name="Minx P."/>
            <person name="Mullikin J.C."/>
            <person name="Plumb R.W."/>
            <person name="Rogers J."/>
            <person name="Schein J.E."/>
            <person name="Sohrmann M."/>
            <person name="Spieth J."/>
            <person name="Stajich J.E."/>
            <person name="Wei C."/>
            <person name="Willey D."/>
            <person name="Wilson R.K."/>
            <person name="Durbin R.M."/>
            <person name="Waterston R.H."/>
        </authorList>
    </citation>
    <scope>NUCLEOTIDE SEQUENCE [LARGE SCALE GENOMIC DNA]</scope>
    <source>
        <strain>AF16</strain>
    </source>
</reference>
<gene>
    <name type="primary">mocs-1</name>
    <name type="ORF">CBG07703</name>
</gene>
<organism>
    <name type="scientific">Caenorhabditis briggsae</name>
    <dbReference type="NCBI Taxonomy" id="6238"/>
    <lineage>
        <taxon>Eukaryota</taxon>
        <taxon>Metazoa</taxon>
        <taxon>Ecdysozoa</taxon>
        <taxon>Nematoda</taxon>
        <taxon>Chromadorea</taxon>
        <taxon>Rhabditida</taxon>
        <taxon>Rhabditina</taxon>
        <taxon>Rhabditomorpha</taxon>
        <taxon>Rhabditoidea</taxon>
        <taxon>Rhabditidae</taxon>
        <taxon>Peloderinae</taxon>
        <taxon>Caenorhabditis</taxon>
    </lineage>
</organism>
<accession>A8X493</accession>
<comment type="function">
    <text evidence="2">Sulfurates the molybdenum cofactor. Sulfation of molybdenum is essential for xanthine dehydrogenase (XDH) and aldehyde oxidase (ADO) enzymes in which molybdenum cofactor is liganded by 1 oxygen and 1 sulfur atom in active form.</text>
</comment>
<comment type="catalytic activity">
    <reaction evidence="2">
        <text>Mo-molybdopterin + L-cysteine + AH2 = thio-Mo-molybdopterin + L-alanine + A + H2O</text>
        <dbReference type="Rhea" id="RHEA:42636"/>
        <dbReference type="ChEBI" id="CHEBI:13193"/>
        <dbReference type="ChEBI" id="CHEBI:15377"/>
        <dbReference type="ChEBI" id="CHEBI:17499"/>
        <dbReference type="ChEBI" id="CHEBI:35235"/>
        <dbReference type="ChEBI" id="CHEBI:57972"/>
        <dbReference type="ChEBI" id="CHEBI:71302"/>
        <dbReference type="ChEBI" id="CHEBI:82685"/>
        <dbReference type="EC" id="2.8.1.9"/>
    </reaction>
</comment>
<comment type="cofactor">
    <cofactor evidence="2">
        <name>pyridoxal 5'-phosphate</name>
        <dbReference type="ChEBI" id="CHEBI:597326"/>
    </cofactor>
</comment>
<comment type="pathway">
    <text evidence="1">Cofactor biosynthesis; molybdopterin biosynthesis.</text>
</comment>
<comment type="similarity">
    <text evidence="2">Belongs to the class-V pyridoxal-phosphate-dependent aminotransferase family. MOCOS subfamily.</text>
</comment>
<comment type="sequence caution" evidence="3">
    <conflict type="erroneous gene model prediction">
        <sequence resource="EMBL-CDS" id="CAP27453"/>
    </conflict>
</comment>
<feature type="chain" id="PRO_0000369363" description="Molybdenum cofactor sulfurase">
    <location>
        <begin position="1"/>
        <end position="707"/>
    </location>
</feature>
<feature type="domain" description="MOSC" evidence="2">
    <location>
        <begin position="558"/>
        <end position="705"/>
    </location>
</feature>
<feature type="active site" evidence="2">
    <location>
        <position position="365"/>
    </location>
</feature>
<feature type="modified residue" description="N6-(pyridoxal phosphate)lysine" evidence="2">
    <location>
        <position position="206"/>
    </location>
</feature>